<evidence type="ECO:0000250" key="1"/>
<evidence type="ECO:0000255" key="2">
    <source>
        <dbReference type="PROSITE-ProRule" id="PRU00541"/>
    </source>
</evidence>
<evidence type="ECO:0000255" key="3">
    <source>
        <dbReference type="PROSITE-ProRule" id="PRU00542"/>
    </source>
</evidence>
<evidence type="ECO:0000305" key="4"/>
<accession>Q6FM43</accession>
<protein>
    <recommendedName>
        <fullName>Pre-mRNA-splicing ATP-dependent RNA helicase PRP28</fullName>
        <ecNumber>3.6.4.13</ecNumber>
    </recommendedName>
</protein>
<dbReference type="EC" id="3.6.4.13"/>
<dbReference type="EMBL" id="CR380957">
    <property type="protein sequence ID" value="CAG61664.1"/>
    <property type="molecule type" value="Genomic_DNA"/>
</dbReference>
<dbReference type="RefSeq" id="XP_448701.1">
    <property type="nucleotide sequence ID" value="XM_448701.1"/>
</dbReference>
<dbReference type="SMR" id="Q6FM43"/>
<dbReference type="FunCoup" id="Q6FM43">
    <property type="interactions" value="1000"/>
</dbReference>
<dbReference type="STRING" id="284593.Q6FM43"/>
<dbReference type="EnsemblFungi" id="CAGL0K11198g-T">
    <property type="protein sequence ID" value="CAGL0K11198g-T-p1"/>
    <property type="gene ID" value="CAGL0K11198g"/>
</dbReference>
<dbReference type="KEGG" id="cgr:2890090"/>
<dbReference type="CGD" id="CAL0134849">
    <property type="gene designation" value="CAGL0K11198g"/>
</dbReference>
<dbReference type="VEuPathDB" id="FungiDB:CAGL0K11198g"/>
<dbReference type="eggNOG" id="KOG0333">
    <property type="taxonomic scope" value="Eukaryota"/>
</dbReference>
<dbReference type="HOGENOM" id="CLU_003041_11_4_1"/>
<dbReference type="InParanoid" id="Q6FM43"/>
<dbReference type="OMA" id="IFINYKR"/>
<dbReference type="Proteomes" id="UP000002428">
    <property type="component" value="Chromosome K"/>
</dbReference>
<dbReference type="GO" id="GO:0005737">
    <property type="term" value="C:cytoplasm"/>
    <property type="evidence" value="ECO:0007669"/>
    <property type="project" value="UniProtKB-SubCell"/>
</dbReference>
<dbReference type="GO" id="GO:0005682">
    <property type="term" value="C:U5 snRNP"/>
    <property type="evidence" value="ECO:0007669"/>
    <property type="project" value="EnsemblFungi"/>
</dbReference>
<dbReference type="GO" id="GO:0005524">
    <property type="term" value="F:ATP binding"/>
    <property type="evidence" value="ECO:0007669"/>
    <property type="project" value="UniProtKB-KW"/>
</dbReference>
<dbReference type="GO" id="GO:0016887">
    <property type="term" value="F:ATP hydrolysis activity"/>
    <property type="evidence" value="ECO:0007669"/>
    <property type="project" value="RHEA"/>
</dbReference>
<dbReference type="GO" id="GO:0000384">
    <property type="term" value="F:first spliceosomal transesterification activity"/>
    <property type="evidence" value="ECO:0007669"/>
    <property type="project" value="EnsemblFungi"/>
</dbReference>
<dbReference type="GO" id="GO:0003723">
    <property type="term" value="F:RNA binding"/>
    <property type="evidence" value="ECO:0007669"/>
    <property type="project" value="EnsemblFungi"/>
</dbReference>
<dbReference type="GO" id="GO:0003724">
    <property type="term" value="F:RNA helicase activity"/>
    <property type="evidence" value="ECO:0007669"/>
    <property type="project" value="UniProtKB-EC"/>
</dbReference>
<dbReference type="GO" id="GO:0000395">
    <property type="term" value="P:mRNA 5'-splice site recognition"/>
    <property type="evidence" value="ECO:0007669"/>
    <property type="project" value="EnsemblFungi"/>
</dbReference>
<dbReference type="CDD" id="cd17945">
    <property type="entry name" value="DEADc_DDX23"/>
    <property type="match status" value="1"/>
</dbReference>
<dbReference type="CDD" id="cd18787">
    <property type="entry name" value="SF2_C_DEAD"/>
    <property type="match status" value="1"/>
</dbReference>
<dbReference type="Gene3D" id="3.40.50.300">
    <property type="entry name" value="P-loop containing nucleotide triphosphate hydrolases"/>
    <property type="match status" value="2"/>
</dbReference>
<dbReference type="InterPro" id="IPR011545">
    <property type="entry name" value="DEAD/DEAH_box_helicase_dom"/>
</dbReference>
<dbReference type="InterPro" id="IPR014001">
    <property type="entry name" value="Helicase_ATP-bd"/>
</dbReference>
<dbReference type="InterPro" id="IPR001650">
    <property type="entry name" value="Helicase_C-like"/>
</dbReference>
<dbReference type="InterPro" id="IPR027417">
    <property type="entry name" value="P-loop_NTPase"/>
</dbReference>
<dbReference type="InterPro" id="IPR000629">
    <property type="entry name" value="RNA-helicase_DEAD-box_CS"/>
</dbReference>
<dbReference type="PANTHER" id="PTHR47958">
    <property type="entry name" value="ATP-DEPENDENT RNA HELICASE DBP3"/>
    <property type="match status" value="1"/>
</dbReference>
<dbReference type="Pfam" id="PF00270">
    <property type="entry name" value="DEAD"/>
    <property type="match status" value="1"/>
</dbReference>
<dbReference type="Pfam" id="PF00271">
    <property type="entry name" value="Helicase_C"/>
    <property type="match status" value="1"/>
</dbReference>
<dbReference type="SMART" id="SM00487">
    <property type="entry name" value="DEXDc"/>
    <property type="match status" value="1"/>
</dbReference>
<dbReference type="SMART" id="SM00490">
    <property type="entry name" value="HELICc"/>
    <property type="match status" value="1"/>
</dbReference>
<dbReference type="SUPFAM" id="SSF52540">
    <property type="entry name" value="P-loop containing nucleoside triphosphate hydrolases"/>
    <property type="match status" value="1"/>
</dbReference>
<dbReference type="PROSITE" id="PS00039">
    <property type="entry name" value="DEAD_ATP_HELICASE"/>
    <property type="match status" value="1"/>
</dbReference>
<dbReference type="PROSITE" id="PS51192">
    <property type="entry name" value="HELICASE_ATP_BIND_1"/>
    <property type="match status" value="1"/>
</dbReference>
<dbReference type="PROSITE" id="PS51194">
    <property type="entry name" value="HELICASE_CTER"/>
    <property type="match status" value="1"/>
</dbReference>
<dbReference type="PROSITE" id="PS51195">
    <property type="entry name" value="Q_MOTIF"/>
    <property type="match status" value="1"/>
</dbReference>
<gene>
    <name type="primary">PRP28</name>
    <name type="ordered locus">CAGL0K11198g</name>
</gene>
<name>PRP28_CANGA</name>
<keyword id="KW-0067">ATP-binding</keyword>
<keyword id="KW-0963">Cytoplasm</keyword>
<keyword id="KW-0347">Helicase</keyword>
<keyword id="KW-0378">Hydrolase</keyword>
<keyword id="KW-0507">mRNA processing</keyword>
<keyword id="KW-0508">mRNA splicing</keyword>
<keyword id="KW-0547">Nucleotide-binding</keyword>
<keyword id="KW-0539">Nucleus</keyword>
<keyword id="KW-1185">Reference proteome</keyword>
<organism>
    <name type="scientific">Candida glabrata (strain ATCC 2001 / BCRC 20586 / JCM 3761 / NBRC 0622 / NRRL Y-65 / CBS 138)</name>
    <name type="common">Yeast</name>
    <name type="synonym">Nakaseomyces glabratus</name>
    <dbReference type="NCBI Taxonomy" id="284593"/>
    <lineage>
        <taxon>Eukaryota</taxon>
        <taxon>Fungi</taxon>
        <taxon>Dikarya</taxon>
        <taxon>Ascomycota</taxon>
        <taxon>Saccharomycotina</taxon>
        <taxon>Saccharomycetes</taxon>
        <taxon>Saccharomycetales</taxon>
        <taxon>Saccharomycetaceae</taxon>
        <taxon>Nakaseomyces</taxon>
    </lineage>
</organism>
<comment type="function">
    <text evidence="1">ATP-dependent RNA helicase involved in mRNA splicing. May destabilize the U1/5'-splice site duplex to permit an effective competition for the 5'-splice site by the U6 snRNA, resulting in the switch between U1 and U6 at the 5'-splice site. May also act to unwind the U4/U6 base-pairing interaction in the U4/U6/U5 snRNP, facilitating the first covalent step of splicing (By similarity).</text>
</comment>
<comment type="catalytic activity">
    <reaction>
        <text>ATP + H2O = ADP + phosphate + H(+)</text>
        <dbReference type="Rhea" id="RHEA:13065"/>
        <dbReference type="ChEBI" id="CHEBI:15377"/>
        <dbReference type="ChEBI" id="CHEBI:15378"/>
        <dbReference type="ChEBI" id="CHEBI:30616"/>
        <dbReference type="ChEBI" id="CHEBI:43474"/>
        <dbReference type="ChEBI" id="CHEBI:456216"/>
        <dbReference type="EC" id="3.6.4.13"/>
    </reaction>
</comment>
<comment type="subunit">
    <text evidence="1">Component of the U5 snRNP complex.</text>
</comment>
<comment type="subcellular location">
    <subcellularLocation>
        <location evidence="1">Cytoplasm</location>
    </subcellularLocation>
    <subcellularLocation>
        <location evidence="1">Nucleus</location>
    </subcellularLocation>
</comment>
<comment type="domain">
    <text>The Q motif is unique to and characteristic of the DEAD box family of RNA helicases and controls ATP binding and hydrolysis.</text>
</comment>
<comment type="similarity">
    <text evidence="4">Belongs to the DEAD box helicase family. DDX23/PRP28 subfamily.</text>
</comment>
<reference key="1">
    <citation type="journal article" date="2004" name="Nature">
        <title>Genome evolution in yeasts.</title>
        <authorList>
            <person name="Dujon B."/>
            <person name="Sherman D."/>
            <person name="Fischer G."/>
            <person name="Durrens P."/>
            <person name="Casaregola S."/>
            <person name="Lafontaine I."/>
            <person name="de Montigny J."/>
            <person name="Marck C."/>
            <person name="Neuveglise C."/>
            <person name="Talla E."/>
            <person name="Goffard N."/>
            <person name="Frangeul L."/>
            <person name="Aigle M."/>
            <person name="Anthouard V."/>
            <person name="Babour A."/>
            <person name="Barbe V."/>
            <person name="Barnay S."/>
            <person name="Blanchin S."/>
            <person name="Beckerich J.-M."/>
            <person name="Beyne E."/>
            <person name="Bleykasten C."/>
            <person name="Boisrame A."/>
            <person name="Boyer J."/>
            <person name="Cattolico L."/>
            <person name="Confanioleri F."/>
            <person name="de Daruvar A."/>
            <person name="Despons L."/>
            <person name="Fabre E."/>
            <person name="Fairhead C."/>
            <person name="Ferry-Dumazet H."/>
            <person name="Groppi A."/>
            <person name="Hantraye F."/>
            <person name="Hennequin C."/>
            <person name="Jauniaux N."/>
            <person name="Joyet P."/>
            <person name="Kachouri R."/>
            <person name="Kerrest A."/>
            <person name="Koszul R."/>
            <person name="Lemaire M."/>
            <person name="Lesur I."/>
            <person name="Ma L."/>
            <person name="Muller H."/>
            <person name="Nicaud J.-M."/>
            <person name="Nikolski M."/>
            <person name="Oztas S."/>
            <person name="Ozier-Kalogeropoulos O."/>
            <person name="Pellenz S."/>
            <person name="Potier S."/>
            <person name="Richard G.-F."/>
            <person name="Straub M.-L."/>
            <person name="Suleau A."/>
            <person name="Swennen D."/>
            <person name="Tekaia F."/>
            <person name="Wesolowski-Louvel M."/>
            <person name="Westhof E."/>
            <person name="Wirth B."/>
            <person name="Zeniou-Meyer M."/>
            <person name="Zivanovic Y."/>
            <person name="Bolotin-Fukuhara M."/>
            <person name="Thierry A."/>
            <person name="Bouchier C."/>
            <person name="Caudron B."/>
            <person name="Scarpelli C."/>
            <person name="Gaillardin C."/>
            <person name="Weissenbach J."/>
            <person name="Wincker P."/>
            <person name="Souciet J.-L."/>
        </authorList>
    </citation>
    <scope>NUCLEOTIDE SEQUENCE [LARGE SCALE GENOMIC DNA]</scope>
    <source>
        <strain>ATCC 2001 / BCRC 20586 / JCM 3761 / NBRC 0622 / NRRL Y-65 / CBS 138</strain>
    </source>
</reference>
<feature type="chain" id="PRO_0000232372" description="Pre-mRNA-splicing ATP-dependent RNA helicase PRP28">
    <location>
        <begin position="1"/>
        <end position="582"/>
    </location>
</feature>
<feature type="domain" description="Helicase ATP-binding" evidence="2">
    <location>
        <begin position="207"/>
        <end position="394"/>
    </location>
</feature>
<feature type="domain" description="Helicase C-terminal" evidence="3">
    <location>
        <begin position="416"/>
        <end position="570"/>
    </location>
</feature>
<feature type="short sequence motif" description="Q motif">
    <location>
        <begin position="170"/>
        <end position="199"/>
    </location>
</feature>
<feature type="short sequence motif" description="DEAD box">
    <location>
        <begin position="338"/>
        <end position="341"/>
    </location>
</feature>
<feature type="binding site" evidence="2">
    <location>
        <begin position="220"/>
        <end position="227"/>
    </location>
    <ligand>
        <name>ATP</name>
        <dbReference type="ChEBI" id="CHEBI:30616"/>
    </ligand>
</feature>
<proteinExistence type="inferred from homology"/>
<sequence>MLVLRKFRWRKWTAETLESTKMTRPIDVHQLLKSRSAGPKYMSVEERERVVIEHSNDEVDLGVEYAKKRNVDEVAEDSARESKKKSKRLDFDWDPADNTLEGYQPIVNPVILERIRQQEDQGDDLEAQYLGKSWREKLLVEMDERDWRIMREEFNITSKGKGAVKHPLRNWSETNVIPTDLVRALTEGMGFDEPTAIQRITIPNAISSNKSVPRDILGIASTGSGKTLAFSIPILARLDALPARPVNLKTLDGPLALVLVPTRELAQQISQEINRLLSAWENKKNLNAVSIVGGHSMSDISHTLRNGCDILIATPGRLLDVLDNHLVVLNKIQSLVLDEADRMIDLGFEDQMKSILSHLMADELAARQTMLFTATLSSSVESIAKGYLKNPLHVSVGSRWDSDKPLITQVVRHTGDDDKKLSFLKDDLIKNGLPAIIFINYKETADWLTLRLSDRFNIVTLHGSKSQSQRESAIQKLKSGTANVLIATNVAARGLDIPDVALVVNFQMSKKFDDYIHRIGRTGRAGKTGIAVTYLTGEEDPQLIKQLAKYVKDVDPNKENDFPEECAKHFGIVSETRNRIIY</sequence>